<keyword id="KW-0249">Electron transport</keyword>
<keyword id="KW-0472">Membrane</keyword>
<keyword id="KW-0496">Mitochondrion</keyword>
<keyword id="KW-0520">NAD</keyword>
<keyword id="KW-0679">Respiratory chain</keyword>
<keyword id="KW-1278">Translocase</keyword>
<keyword id="KW-0812">Transmembrane</keyword>
<keyword id="KW-1133">Transmembrane helix</keyword>
<keyword id="KW-0813">Transport</keyword>
<keyword id="KW-0830">Ubiquinone</keyword>
<sequence length="459" mass="51629">MLKLLLPMIMLLPTSWLCKKNHLSYTTLLFSFTIALLSLQWLKPPFELTTTFSNTYMGVDPISTPLLILTSWMTPLMILVSKNHLIQEPLSRKRTFTTTIISLQISLTLAFSALEMMLFFTMFEATLIPTLIIITRWGNQMERLSAGTYFLFYTLIGSLPLLIALTSLHTNYNTLSLFILQLNPPNLTNSWAHTMWWFALLMAFMIKMPLYGLHLWLPKAHVEAPIAGSMILAGVLLKLGGYGIIRVTLMLNPLTKSLSYPFMTLSLWGIIMTGLICLRQTDLKSLIAYSSVGLMGLVISAALLQTPLSITGAIILMIAHGLSSSMLFCLANTNYERTHNRTLLLTHSMQTLLPLMTIWWLLASLMNMALPPTINLMGELTIIASLFSWANITIILTGLGTLISALYSLHMFSTTQWGGTPPHHMHTITPSHTREHLIMMLHMVPLILLMMKPQLMTTF</sequence>
<proteinExistence type="inferred from homology"/>
<comment type="function">
    <text evidence="1">Core subunit of the mitochondrial membrane respiratory chain NADH dehydrogenase (Complex I) that is believed to belong to the minimal assembly required for catalysis. Complex I functions in the transfer of electrons from NADH to the respiratory chain. The immediate electron acceptor for the enzyme is believed to be ubiquinone (By similarity).</text>
</comment>
<comment type="catalytic activity">
    <reaction>
        <text>a ubiquinone + NADH + 5 H(+)(in) = a ubiquinol + NAD(+) + 4 H(+)(out)</text>
        <dbReference type="Rhea" id="RHEA:29091"/>
        <dbReference type="Rhea" id="RHEA-COMP:9565"/>
        <dbReference type="Rhea" id="RHEA-COMP:9566"/>
        <dbReference type="ChEBI" id="CHEBI:15378"/>
        <dbReference type="ChEBI" id="CHEBI:16389"/>
        <dbReference type="ChEBI" id="CHEBI:17976"/>
        <dbReference type="ChEBI" id="CHEBI:57540"/>
        <dbReference type="ChEBI" id="CHEBI:57945"/>
        <dbReference type="EC" id="7.1.1.2"/>
    </reaction>
</comment>
<comment type="subcellular location">
    <subcellularLocation>
        <location evidence="1">Mitochondrion membrane</location>
        <topology evidence="1">Multi-pass membrane protein</topology>
    </subcellularLocation>
</comment>
<comment type="similarity">
    <text evidence="3">Belongs to the complex I subunit 4 family.</text>
</comment>
<protein>
    <recommendedName>
        <fullName>NADH-ubiquinone oxidoreductase chain 4</fullName>
        <ecNumber>7.1.1.2</ecNumber>
    </recommendedName>
    <alternativeName>
        <fullName>NADH dehydrogenase subunit 4</fullName>
    </alternativeName>
</protein>
<gene>
    <name type="primary">MT-ND4</name>
    <name type="synonym">MTND4</name>
    <name type="synonym">NADH4</name>
    <name type="synonym">ND4</name>
</gene>
<geneLocation type="mitochondrion"/>
<organism>
    <name type="scientific">Pelomedusa subrufa</name>
    <name type="common">African side-necked turtle</name>
    <dbReference type="NCBI Taxonomy" id="44522"/>
    <lineage>
        <taxon>Eukaryota</taxon>
        <taxon>Metazoa</taxon>
        <taxon>Chordata</taxon>
        <taxon>Craniata</taxon>
        <taxon>Vertebrata</taxon>
        <taxon>Euteleostomi</taxon>
        <taxon>Archelosauria</taxon>
        <taxon>Testudinata</taxon>
        <taxon>Testudines</taxon>
        <taxon>Pleurodira</taxon>
        <taxon>Pelomedusidae</taxon>
        <taxon>Pelomedusa</taxon>
    </lineage>
</organism>
<accession>O79677</accession>
<evidence type="ECO:0000250" key="1"/>
<evidence type="ECO:0000255" key="2"/>
<evidence type="ECO:0000305" key="3"/>
<dbReference type="EC" id="7.1.1.2"/>
<dbReference type="EMBL" id="AF039066">
    <property type="protein sequence ID" value="AAD05057.1"/>
    <property type="molecule type" value="Genomic_DNA"/>
</dbReference>
<dbReference type="PIR" id="T11110">
    <property type="entry name" value="T11110"/>
</dbReference>
<dbReference type="RefSeq" id="NP_008441.1">
    <property type="nucleotide sequence ID" value="NC_001947.1"/>
</dbReference>
<dbReference type="SMR" id="O79677"/>
<dbReference type="GeneID" id="808289"/>
<dbReference type="CTD" id="4538"/>
<dbReference type="GO" id="GO:0031966">
    <property type="term" value="C:mitochondrial membrane"/>
    <property type="evidence" value="ECO:0007669"/>
    <property type="project" value="UniProtKB-SubCell"/>
</dbReference>
<dbReference type="GO" id="GO:0008137">
    <property type="term" value="F:NADH dehydrogenase (ubiquinone) activity"/>
    <property type="evidence" value="ECO:0007669"/>
    <property type="project" value="UniProtKB-EC"/>
</dbReference>
<dbReference type="GO" id="GO:0048039">
    <property type="term" value="F:ubiquinone binding"/>
    <property type="evidence" value="ECO:0007669"/>
    <property type="project" value="TreeGrafter"/>
</dbReference>
<dbReference type="GO" id="GO:0042773">
    <property type="term" value="P:ATP synthesis coupled electron transport"/>
    <property type="evidence" value="ECO:0007669"/>
    <property type="project" value="InterPro"/>
</dbReference>
<dbReference type="GO" id="GO:0015990">
    <property type="term" value="P:electron transport coupled proton transport"/>
    <property type="evidence" value="ECO:0007669"/>
    <property type="project" value="TreeGrafter"/>
</dbReference>
<dbReference type="InterPro" id="IPR000260">
    <property type="entry name" value="NADH4_N"/>
</dbReference>
<dbReference type="InterPro" id="IPR010227">
    <property type="entry name" value="NADH_Q_OxRdtase_chainM/4"/>
</dbReference>
<dbReference type="InterPro" id="IPR003918">
    <property type="entry name" value="NADH_UbQ_OxRdtase"/>
</dbReference>
<dbReference type="InterPro" id="IPR001750">
    <property type="entry name" value="ND/Mrp_TM"/>
</dbReference>
<dbReference type="NCBIfam" id="TIGR01972">
    <property type="entry name" value="NDH_I_M"/>
    <property type="match status" value="1"/>
</dbReference>
<dbReference type="PANTHER" id="PTHR43507">
    <property type="entry name" value="NADH-UBIQUINONE OXIDOREDUCTASE CHAIN 4"/>
    <property type="match status" value="1"/>
</dbReference>
<dbReference type="PANTHER" id="PTHR43507:SF20">
    <property type="entry name" value="NADH-UBIQUINONE OXIDOREDUCTASE CHAIN 4"/>
    <property type="match status" value="1"/>
</dbReference>
<dbReference type="Pfam" id="PF01059">
    <property type="entry name" value="Oxidored_q5_N"/>
    <property type="match status" value="1"/>
</dbReference>
<dbReference type="Pfam" id="PF00361">
    <property type="entry name" value="Proton_antipo_M"/>
    <property type="match status" value="1"/>
</dbReference>
<dbReference type="PRINTS" id="PR01437">
    <property type="entry name" value="NUOXDRDTASE4"/>
</dbReference>
<feature type="chain" id="PRO_0000117966" description="NADH-ubiquinone oxidoreductase chain 4">
    <location>
        <begin position="1"/>
        <end position="459"/>
    </location>
</feature>
<feature type="transmembrane region" description="Helical" evidence="2">
    <location>
        <begin position="22"/>
        <end position="42"/>
    </location>
</feature>
<feature type="transmembrane region" description="Helical" evidence="2">
    <location>
        <begin position="61"/>
        <end position="81"/>
    </location>
</feature>
<feature type="transmembrane region" description="Helical" evidence="2">
    <location>
        <begin position="94"/>
        <end position="113"/>
    </location>
</feature>
<feature type="transmembrane region" description="Helical" evidence="2">
    <location>
        <begin position="114"/>
        <end position="134"/>
    </location>
</feature>
<feature type="transmembrane region" description="Helical" evidence="2">
    <location>
        <begin position="146"/>
        <end position="166"/>
    </location>
</feature>
<feature type="transmembrane region" description="Helical" evidence="2">
    <location>
        <begin position="197"/>
        <end position="217"/>
    </location>
</feature>
<feature type="transmembrane region" description="Helical" evidence="2">
    <location>
        <begin position="225"/>
        <end position="245"/>
    </location>
</feature>
<feature type="transmembrane region" description="Helical" evidence="2">
    <location>
        <begin position="258"/>
        <end position="278"/>
    </location>
</feature>
<feature type="transmembrane region" description="Helical" evidence="2">
    <location>
        <begin position="285"/>
        <end position="304"/>
    </location>
</feature>
<feature type="transmembrane region" description="Helical" evidence="2">
    <location>
        <begin position="308"/>
        <end position="330"/>
    </location>
</feature>
<feature type="transmembrane region" description="Helical" evidence="2">
    <location>
        <begin position="352"/>
        <end position="372"/>
    </location>
</feature>
<feature type="transmembrane region" description="Helical" evidence="2">
    <location>
        <begin position="380"/>
        <end position="400"/>
    </location>
</feature>
<feature type="transmembrane region" description="Helical" evidence="2">
    <location>
        <begin position="437"/>
        <end position="457"/>
    </location>
</feature>
<name>NU4M_PELSU</name>
<reference key="1">
    <citation type="journal article" date="1998" name="Proc. Natl. Acad. Sci. U.S.A.">
        <title>Complete mitochondrial genome suggests diapsid affinities of turtles.</title>
        <authorList>
            <person name="Zardoya R."/>
            <person name="Meyer A."/>
        </authorList>
    </citation>
    <scope>NUCLEOTIDE SEQUENCE [GENOMIC DNA]</scope>
</reference>